<comment type="function">
    <text evidence="1">Photosystem II (PSII) is a light-driven water:plastoquinone oxidoreductase that uses light energy to abstract electrons from H(2)O, generating O(2) and a proton gradient subsequently used for ATP formation. It consists of a core antenna complex that captures photons, and an electron transfer chain that converts photonic excitation into a charge separation. The D1/D2 (PsbA/PsbD) reaction center heterodimer binds P680, the primary electron donor of PSII as well as several subsequent electron acceptors.</text>
</comment>
<comment type="catalytic activity">
    <reaction evidence="1">
        <text>2 a plastoquinone + 4 hnu + 2 H2O = 2 a plastoquinol + O2</text>
        <dbReference type="Rhea" id="RHEA:36359"/>
        <dbReference type="Rhea" id="RHEA-COMP:9561"/>
        <dbReference type="Rhea" id="RHEA-COMP:9562"/>
        <dbReference type="ChEBI" id="CHEBI:15377"/>
        <dbReference type="ChEBI" id="CHEBI:15379"/>
        <dbReference type="ChEBI" id="CHEBI:17757"/>
        <dbReference type="ChEBI" id="CHEBI:30212"/>
        <dbReference type="ChEBI" id="CHEBI:62192"/>
        <dbReference type="EC" id="1.10.3.9"/>
    </reaction>
</comment>
<comment type="cofactor">
    <text evidence="1">The D1/D2 heterodimer binds P680, chlorophylls that are the primary electron donor of PSII, and subsequent electron acceptors. It shares a non-heme iron and each subunit binds pheophytin, quinone, additional chlorophylls, carotenoids and lipids. D1 provides most of the ligands for the Mn4-Ca-O5 cluster of the oxygen-evolving complex (OEC). There is also a Cl(-1) ion associated with D1 and D2, which is required for oxygen evolution. The PSII complex binds additional chlorophylls, carotenoids and specific lipids.</text>
</comment>
<comment type="subunit">
    <text evidence="1">PSII is composed of 1 copy each of membrane proteins PsbA, PsbB, PsbC, PsbD, PsbE, PsbF, PsbH, PsbI, PsbJ, PsbK, PsbL, PsbM, PsbT, PsbX, PsbY, PsbZ, Psb30/Ycf12, at least 3 peripheral proteins of the oxygen-evolving complex and a large number of cofactors. It forms dimeric complexes.</text>
</comment>
<comment type="subcellular location">
    <subcellularLocation>
        <location evidence="1">Plastid</location>
        <location evidence="1">Chloroplast thylakoid membrane</location>
        <topology evidence="1">Multi-pass membrane protein</topology>
    </subcellularLocation>
</comment>
<comment type="PTM">
    <text evidence="1">Tyr-161 forms a radical intermediate that is referred to as redox-active TyrZ, YZ or Y-Z.</text>
</comment>
<comment type="PTM">
    <text evidence="1">C-terminally processed by CTPA; processing is essential to allow assembly of the oxygen-evolving complex and thus photosynthetic growth.</text>
</comment>
<comment type="miscellaneous">
    <text evidence="1">2 of the reaction center chlorophylls (ChlD1 and ChlD2) are entirely coordinated by water.</text>
</comment>
<comment type="miscellaneous">
    <text evidence="1">Herbicides such as atrazine, BNT, diuron or ioxynil bind in the Q(B) binding site and block subsequent electron transfer.</text>
</comment>
<comment type="similarity">
    <text evidence="1">Belongs to the reaction center PufL/M/PsbA/D family.</text>
</comment>
<geneLocation type="chloroplast"/>
<reference key="1">
    <citation type="journal article" date="2007" name="BMC Biol.">
        <title>A clade uniting the green algae Mesostigma viride and Chlorokybus atmophyticus represents the deepest branch of the Streptophyta in chloroplast genome-based phylogenies.</title>
        <authorList>
            <person name="Lemieux C."/>
            <person name="Otis C."/>
            <person name="Turmel M."/>
        </authorList>
    </citation>
    <scope>NUCLEOTIDE SEQUENCE [LARGE SCALE GENOMIC DNA]</scope>
    <source>
        <strain>SAG 48.80</strain>
    </source>
</reference>
<organism>
    <name type="scientific">Chlorokybus atmophyticus</name>
    <name type="common">Soil alga</name>
    <dbReference type="NCBI Taxonomy" id="3144"/>
    <lineage>
        <taxon>Eukaryota</taxon>
        <taxon>Viridiplantae</taxon>
        <taxon>Streptophyta</taxon>
        <taxon>Chlorokybophyceae</taxon>
        <taxon>Chlorokybales</taxon>
        <taxon>Chlorokybaceae</taxon>
        <taxon>Chlorokybus</taxon>
    </lineage>
</organism>
<proteinExistence type="inferred from homology"/>
<name>PSBA_CHLAT</name>
<keyword id="KW-0007">Acetylation</keyword>
<keyword id="KW-0106">Calcium</keyword>
<keyword id="KW-0148">Chlorophyll</keyword>
<keyword id="KW-0150">Chloroplast</keyword>
<keyword id="KW-0157">Chromophore</keyword>
<keyword id="KW-0249">Electron transport</keyword>
<keyword id="KW-0359">Herbicide resistance</keyword>
<keyword id="KW-0408">Iron</keyword>
<keyword id="KW-0460">Magnesium</keyword>
<keyword id="KW-0464">Manganese</keyword>
<keyword id="KW-0472">Membrane</keyword>
<keyword id="KW-0479">Metal-binding</keyword>
<keyword id="KW-0560">Oxidoreductase</keyword>
<keyword id="KW-0597">Phosphoprotein</keyword>
<keyword id="KW-0602">Photosynthesis</keyword>
<keyword id="KW-0604">Photosystem II</keyword>
<keyword id="KW-0934">Plastid</keyword>
<keyword id="KW-0793">Thylakoid</keyword>
<keyword id="KW-0812">Transmembrane</keyword>
<keyword id="KW-1133">Transmembrane helix</keyword>
<keyword id="KW-0813">Transport</keyword>
<feature type="initiator methionine" description="Removed" evidence="1">
    <location>
        <position position="1"/>
    </location>
</feature>
<feature type="chain" id="PRO_0000339970" description="Photosystem II protein D1" evidence="1">
    <location>
        <begin position="2"/>
        <end position="344"/>
    </location>
</feature>
<feature type="propeptide" id="PRO_0000339971" evidence="1">
    <location>
        <begin position="345"/>
        <end position="353"/>
    </location>
</feature>
<feature type="transmembrane region" description="Helical" evidence="1">
    <location>
        <begin position="29"/>
        <end position="46"/>
    </location>
</feature>
<feature type="transmembrane region" description="Helical" evidence="1">
    <location>
        <begin position="118"/>
        <end position="133"/>
    </location>
</feature>
<feature type="transmembrane region" description="Helical" evidence="1">
    <location>
        <begin position="142"/>
        <end position="156"/>
    </location>
</feature>
<feature type="transmembrane region" description="Helical" evidence="1">
    <location>
        <begin position="197"/>
        <end position="218"/>
    </location>
</feature>
<feature type="transmembrane region" description="Helical" evidence="1">
    <location>
        <begin position="274"/>
        <end position="288"/>
    </location>
</feature>
<feature type="binding site" description="axial binding residue" evidence="1">
    <location>
        <position position="118"/>
    </location>
    <ligand>
        <name>chlorophyll a</name>
        <dbReference type="ChEBI" id="CHEBI:58416"/>
        <label>ChlzD1</label>
    </ligand>
    <ligandPart>
        <name>Mg</name>
        <dbReference type="ChEBI" id="CHEBI:25107"/>
    </ligandPart>
</feature>
<feature type="binding site" evidence="1">
    <location>
        <position position="126"/>
    </location>
    <ligand>
        <name>pheophytin a</name>
        <dbReference type="ChEBI" id="CHEBI:136840"/>
        <label>D1</label>
    </ligand>
</feature>
<feature type="binding site" evidence="1">
    <location>
        <position position="170"/>
    </location>
    <ligand>
        <name>[CaMn4O5] cluster</name>
        <dbReference type="ChEBI" id="CHEBI:189552"/>
    </ligand>
</feature>
<feature type="binding site" evidence="1">
    <location>
        <position position="189"/>
    </location>
    <ligand>
        <name>[CaMn4O5] cluster</name>
        <dbReference type="ChEBI" id="CHEBI:189552"/>
    </ligand>
</feature>
<feature type="binding site" description="axial binding residue" evidence="1">
    <location>
        <position position="198"/>
    </location>
    <ligand>
        <name>chlorophyll a</name>
        <dbReference type="ChEBI" id="CHEBI:58416"/>
        <label>PD1</label>
    </ligand>
    <ligandPart>
        <name>Mg</name>
        <dbReference type="ChEBI" id="CHEBI:25107"/>
    </ligandPart>
</feature>
<feature type="binding site" evidence="1">
    <location>
        <position position="215"/>
    </location>
    <ligand>
        <name>a quinone</name>
        <dbReference type="ChEBI" id="CHEBI:132124"/>
        <label>B</label>
    </ligand>
</feature>
<feature type="binding site" evidence="1">
    <location>
        <position position="215"/>
    </location>
    <ligand>
        <name>Fe cation</name>
        <dbReference type="ChEBI" id="CHEBI:24875"/>
        <note>ligand shared with heterodimeric partner</note>
    </ligand>
</feature>
<feature type="binding site" evidence="1">
    <location>
        <begin position="264"/>
        <end position="265"/>
    </location>
    <ligand>
        <name>a quinone</name>
        <dbReference type="ChEBI" id="CHEBI:132124"/>
        <label>B</label>
    </ligand>
</feature>
<feature type="binding site" evidence="1">
    <location>
        <position position="272"/>
    </location>
    <ligand>
        <name>Fe cation</name>
        <dbReference type="ChEBI" id="CHEBI:24875"/>
        <note>ligand shared with heterodimeric partner</note>
    </ligand>
</feature>
<feature type="binding site" evidence="1">
    <location>
        <position position="332"/>
    </location>
    <ligand>
        <name>[CaMn4O5] cluster</name>
        <dbReference type="ChEBI" id="CHEBI:189552"/>
    </ligand>
</feature>
<feature type="binding site" evidence="1">
    <location>
        <position position="333"/>
    </location>
    <ligand>
        <name>[CaMn4O5] cluster</name>
        <dbReference type="ChEBI" id="CHEBI:189552"/>
    </ligand>
</feature>
<feature type="binding site" evidence="1">
    <location>
        <position position="342"/>
    </location>
    <ligand>
        <name>[CaMn4O5] cluster</name>
        <dbReference type="ChEBI" id="CHEBI:189552"/>
    </ligand>
</feature>
<feature type="binding site" evidence="1">
    <location>
        <position position="344"/>
    </location>
    <ligand>
        <name>[CaMn4O5] cluster</name>
        <dbReference type="ChEBI" id="CHEBI:189552"/>
    </ligand>
</feature>
<feature type="site" description="Tyrosine radical intermediate" evidence="1">
    <location>
        <position position="161"/>
    </location>
</feature>
<feature type="site" description="Stabilizes free radical intermediate" evidence="1">
    <location>
        <position position="190"/>
    </location>
</feature>
<feature type="site" description="Cleavage; by CTPA" evidence="1">
    <location>
        <begin position="344"/>
        <end position="345"/>
    </location>
</feature>
<feature type="modified residue" description="N-acetylthreonine" evidence="1">
    <location>
        <position position="2"/>
    </location>
</feature>
<feature type="modified residue" description="Phosphothreonine" evidence="1">
    <location>
        <position position="2"/>
    </location>
</feature>
<accession>Q19VC4</accession>
<dbReference type="EC" id="1.10.3.9" evidence="1"/>
<dbReference type="EMBL" id="DQ422812">
    <property type="protein sequence ID" value="ABD62211.2"/>
    <property type="molecule type" value="Genomic_DNA"/>
</dbReference>
<dbReference type="RefSeq" id="YP_001019070.1">
    <property type="nucleotide sequence ID" value="NC_008822.1"/>
</dbReference>
<dbReference type="SMR" id="Q19VC4"/>
<dbReference type="GeneID" id="4783316"/>
<dbReference type="GO" id="GO:0009535">
    <property type="term" value="C:chloroplast thylakoid membrane"/>
    <property type="evidence" value="ECO:0007669"/>
    <property type="project" value="UniProtKB-SubCell"/>
</dbReference>
<dbReference type="GO" id="GO:0009523">
    <property type="term" value="C:photosystem II"/>
    <property type="evidence" value="ECO:0007669"/>
    <property type="project" value="UniProtKB-KW"/>
</dbReference>
<dbReference type="GO" id="GO:0016168">
    <property type="term" value="F:chlorophyll binding"/>
    <property type="evidence" value="ECO:0007669"/>
    <property type="project" value="UniProtKB-UniRule"/>
</dbReference>
<dbReference type="GO" id="GO:0045156">
    <property type="term" value="F:electron transporter, transferring electrons within the cyclic electron transport pathway of photosynthesis activity"/>
    <property type="evidence" value="ECO:0007669"/>
    <property type="project" value="InterPro"/>
</dbReference>
<dbReference type="GO" id="GO:0005506">
    <property type="term" value="F:iron ion binding"/>
    <property type="evidence" value="ECO:0007669"/>
    <property type="project" value="UniProtKB-UniRule"/>
</dbReference>
<dbReference type="GO" id="GO:0016682">
    <property type="term" value="F:oxidoreductase activity, acting on diphenols and related substances as donors, oxygen as acceptor"/>
    <property type="evidence" value="ECO:0007669"/>
    <property type="project" value="UniProtKB-UniRule"/>
</dbReference>
<dbReference type="GO" id="GO:0010242">
    <property type="term" value="F:oxygen evolving activity"/>
    <property type="evidence" value="ECO:0007669"/>
    <property type="project" value="UniProtKB-EC"/>
</dbReference>
<dbReference type="GO" id="GO:0009772">
    <property type="term" value="P:photosynthetic electron transport in photosystem II"/>
    <property type="evidence" value="ECO:0007669"/>
    <property type="project" value="InterPro"/>
</dbReference>
<dbReference type="GO" id="GO:0009635">
    <property type="term" value="P:response to herbicide"/>
    <property type="evidence" value="ECO:0007669"/>
    <property type="project" value="UniProtKB-KW"/>
</dbReference>
<dbReference type="CDD" id="cd09289">
    <property type="entry name" value="Photosystem-II_D1"/>
    <property type="match status" value="1"/>
</dbReference>
<dbReference type="FunFam" id="1.20.85.10:FF:000002">
    <property type="entry name" value="Photosystem II protein D1"/>
    <property type="match status" value="1"/>
</dbReference>
<dbReference type="Gene3D" id="1.20.85.10">
    <property type="entry name" value="Photosystem II protein D1-like"/>
    <property type="match status" value="1"/>
</dbReference>
<dbReference type="HAMAP" id="MF_01379">
    <property type="entry name" value="PSII_PsbA_D1"/>
    <property type="match status" value="1"/>
</dbReference>
<dbReference type="InterPro" id="IPR055266">
    <property type="entry name" value="D1/D2"/>
</dbReference>
<dbReference type="InterPro" id="IPR036854">
    <property type="entry name" value="Photo_II_D1/D2_sf"/>
</dbReference>
<dbReference type="InterPro" id="IPR000484">
    <property type="entry name" value="Photo_RC_L/M"/>
</dbReference>
<dbReference type="InterPro" id="IPR055265">
    <property type="entry name" value="Photo_RC_L/M_CS"/>
</dbReference>
<dbReference type="InterPro" id="IPR005867">
    <property type="entry name" value="PSII_D1"/>
</dbReference>
<dbReference type="NCBIfam" id="TIGR01151">
    <property type="entry name" value="psbA"/>
    <property type="match status" value="1"/>
</dbReference>
<dbReference type="PANTHER" id="PTHR33149:SF12">
    <property type="entry name" value="PHOTOSYSTEM II D2 PROTEIN"/>
    <property type="match status" value="1"/>
</dbReference>
<dbReference type="PANTHER" id="PTHR33149">
    <property type="entry name" value="PHOTOSYSTEM II PROTEIN D1"/>
    <property type="match status" value="1"/>
</dbReference>
<dbReference type="Pfam" id="PF00124">
    <property type="entry name" value="Photo_RC"/>
    <property type="match status" value="1"/>
</dbReference>
<dbReference type="PRINTS" id="PR00256">
    <property type="entry name" value="REACTNCENTRE"/>
</dbReference>
<dbReference type="SUPFAM" id="SSF81483">
    <property type="entry name" value="Bacterial photosystem II reaction centre, L and M subunits"/>
    <property type="match status" value="1"/>
</dbReference>
<dbReference type="PROSITE" id="PS00244">
    <property type="entry name" value="REACTION_CENTER"/>
    <property type="match status" value="1"/>
</dbReference>
<protein>
    <recommendedName>
        <fullName evidence="1">Photosystem II protein D1</fullName>
        <shortName evidence="1">PSII D1 protein</shortName>
        <ecNumber evidence="1">1.10.3.9</ecNumber>
    </recommendedName>
    <alternativeName>
        <fullName evidence="1">Photosystem II Q(B) protein</fullName>
    </alternativeName>
</protein>
<sequence length="353" mass="38872">MTATLERRESASLWSRFCDWITSTDNRLYIGWFGVLMIPLLLTATSVFIIAFIAAPPVDIDGIREPVSGSLLYGNNIISGAIVPTSAAIGLHFYPIWEAASLDEWLYNGGPYEMIVLHFLLGVCCYMGREWELSFRLGMRPWIAVAYSAPVAAATAVFLIYPIGQGSFSDGMPLGISGTFNFMIVFQAEHNILMHPFHMLGVAGVFGGSLFSAMHGSLVTSSLIRETTENESANAGYKFGQEEETYNIVAAHGYFGRLIFQYASFNNSRALHFFLAAWPVIGIWFTALGISTMAFNLNGFNFNQSVVDSQGRVINTWADIINRANLGMEVMHERNAHNFPLDLASVEAPSVNG</sequence>
<evidence type="ECO:0000255" key="1">
    <source>
        <dbReference type="HAMAP-Rule" id="MF_01379"/>
    </source>
</evidence>
<gene>
    <name evidence="1" type="primary">psbA</name>
</gene>